<accession>P20842</accession>
<sequence length="222" mass="24911">MNHCLLAISAVYFKAKWLTPFEKEFTSDYPFYVSPTEMVDVSMMSMYGELFNHASVKESFGNFSIIELPYVGDTSMMVILPDKIDGLESIEQNLTDTNFKKWCNSLDAMFIDVHIPKFKVTGSYNLVDTLVKSGLTEVFGSTGDYSNMCNLDVSVDAMIHKTYIDVNEEYTEAAAATCALVSDCASTITNEFCVDHPFIYVIRHVDGKILFVGRYCSPTTNC</sequence>
<reference key="1">
    <citation type="journal article" date="1990" name="Virology">
        <title>The complete DNA sequence of vaccinia virus.</title>
        <authorList>
            <person name="Goebel S.J."/>
            <person name="Johnson G.P."/>
            <person name="Perkus M.E."/>
            <person name="Davis S.W."/>
            <person name="Winslow J.P."/>
            <person name="Paoletti E."/>
        </authorList>
    </citation>
    <scope>NUCLEOTIDE SEQUENCE [LARGE SCALE GENOMIC DNA]</scope>
</reference>
<reference key="2">
    <citation type="journal article" date="1990" name="Virology">
        <title>Appendix to 'The complete DNA sequence of vaccinia virus'.</title>
        <authorList>
            <person name="Goebel S.J."/>
            <person name="Johnson G.P."/>
            <person name="Perkus M.E."/>
            <person name="Davis S.W."/>
            <person name="Winslow J.P."/>
            <person name="Paoletti E."/>
        </authorList>
    </citation>
    <scope>COMPLETE GENOME</scope>
</reference>
<protein>
    <recommendedName>
        <fullName>Putative serine proteinase inhibitor 2 homolog second part</fullName>
    </recommendedName>
</protein>
<organismHost>
    <name type="scientific">Homo sapiens</name>
    <name type="common">Human</name>
    <dbReference type="NCBI Taxonomy" id="9606"/>
</organismHost>
<comment type="similarity">
    <text evidence="1">Belongs to the serpin family. Poxviruses subfamily.</text>
</comment>
<comment type="caution">
    <text evidence="1">Could be the product of a pseudogene. In contrast to strain WR, where the SPI-2 inhibitor may be involved in the regulation of the complement cascade, in strain Copenhagen it is interrupted by a stop codon and thus is found in two parts.</text>
</comment>
<name>SPI2B_VACCC</name>
<evidence type="ECO:0000305" key="1"/>
<feature type="chain" id="PRO_0000094143" description="Putative serine proteinase inhibitor 2 homolog second part">
    <location>
        <begin position="1"/>
        <end position="222"/>
    </location>
</feature>
<keyword id="KW-1185">Reference proteome</keyword>
<proteinExistence type="uncertain"/>
<dbReference type="EMBL" id="M35027">
    <property type="protein sequence ID" value="AAA48211.1"/>
    <property type="molecule type" value="Genomic_DNA"/>
</dbReference>
<dbReference type="PIR" id="D42527">
    <property type="entry name" value="WMVZB4"/>
</dbReference>
<dbReference type="SMR" id="P20842"/>
<dbReference type="MEROPS" id="I04.049"/>
<dbReference type="Proteomes" id="UP000008269">
    <property type="component" value="Segment"/>
</dbReference>
<dbReference type="GO" id="GO:0005615">
    <property type="term" value="C:extracellular space"/>
    <property type="evidence" value="ECO:0007669"/>
    <property type="project" value="InterPro"/>
</dbReference>
<dbReference type="GO" id="GO:0004867">
    <property type="term" value="F:serine-type endopeptidase inhibitor activity"/>
    <property type="evidence" value="ECO:0007669"/>
    <property type="project" value="InterPro"/>
</dbReference>
<dbReference type="Gene3D" id="2.30.39.10">
    <property type="entry name" value="Alpha-1-antitrypsin, domain 1"/>
    <property type="match status" value="1"/>
</dbReference>
<dbReference type="Gene3D" id="3.30.497.10">
    <property type="entry name" value="Antithrombin, subunit I, domain 2"/>
    <property type="match status" value="1"/>
</dbReference>
<dbReference type="InterPro" id="IPR023795">
    <property type="entry name" value="Serpin_CS"/>
</dbReference>
<dbReference type="InterPro" id="IPR023796">
    <property type="entry name" value="Serpin_dom"/>
</dbReference>
<dbReference type="InterPro" id="IPR000215">
    <property type="entry name" value="Serpin_fam"/>
</dbReference>
<dbReference type="InterPro" id="IPR036186">
    <property type="entry name" value="Serpin_sf"/>
</dbReference>
<dbReference type="InterPro" id="IPR042178">
    <property type="entry name" value="Serpin_sf_1"/>
</dbReference>
<dbReference type="InterPro" id="IPR042185">
    <property type="entry name" value="Serpin_sf_2"/>
</dbReference>
<dbReference type="PANTHER" id="PTHR11461:SF211">
    <property type="entry name" value="GH10112P-RELATED"/>
    <property type="match status" value="1"/>
</dbReference>
<dbReference type="PANTHER" id="PTHR11461">
    <property type="entry name" value="SERINE PROTEASE INHIBITOR, SERPIN"/>
    <property type="match status" value="1"/>
</dbReference>
<dbReference type="Pfam" id="PF00079">
    <property type="entry name" value="Serpin"/>
    <property type="match status" value="1"/>
</dbReference>
<dbReference type="SMART" id="SM00093">
    <property type="entry name" value="SERPIN"/>
    <property type="match status" value="1"/>
</dbReference>
<dbReference type="SUPFAM" id="SSF56574">
    <property type="entry name" value="Serpins"/>
    <property type="match status" value="1"/>
</dbReference>
<dbReference type="PROSITE" id="PS00284">
    <property type="entry name" value="SERPIN"/>
    <property type="match status" value="1"/>
</dbReference>
<organism>
    <name type="scientific">Vaccinia virus (strain Copenhagen)</name>
    <name type="common">VACV</name>
    <dbReference type="NCBI Taxonomy" id="10249"/>
    <lineage>
        <taxon>Viruses</taxon>
        <taxon>Varidnaviria</taxon>
        <taxon>Bamfordvirae</taxon>
        <taxon>Nucleocytoviricota</taxon>
        <taxon>Pokkesviricetes</taxon>
        <taxon>Chitovirales</taxon>
        <taxon>Poxviridae</taxon>
        <taxon>Chordopoxvirinae</taxon>
        <taxon>Orthopoxvirus</taxon>
        <taxon>Vaccinia virus</taxon>
    </lineage>
</organism>
<gene>
    <name type="ORF">B14R</name>
</gene>